<gene>
    <name evidence="1" type="primary">purA</name>
    <name type="ordered locus">P9215_05881</name>
</gene>
<dbReference type="EC" id="6.3.4.4" evidence="1"/>
<dbReference type="EMBL" id="CP000825">
    <property type="protein sequence ID" value="ABV50203.1"/>
    <property type="molecule type" value="Genomic_DNA"/>
</dbReference>
<dbReference type="RefSeq" id="WP_012007330.1">
    <property type="nucleotide sequence ID" value="NC_009840.1"/>
</dbReference>
<dbReference type="SMR" id="A8G3M2"/>
<dbReference type="STRING" id="93060.P9215_05881"/>
<dbReference type="KEGG" id="pmh:P9215_05881"/>
<dbReference type="eggNOG" id="COG0104">
    <property type="taxonomic scope" value="Bacteria"/>
</dbReference>
<dbReference type="HOGENOM" id="CLU_029848_0_0_3"/>
<dbReference type="OrthoDB" id="9807553at2"/>
<dbReference type="UniPathway" id="UPA00075">
    <property type="reaction ID" value="UER00335"/>
</dbReference>
<dbReference type="Proteomes" id="UP000002014">
    <property type="component" value="Chromosome"/>
</dbReference>
<dbReference type="GO" id="GO:0005737">
    <property type="term" value="C:cytoplasm"/>
    <property type="evidence" value="ECO:0007669"/>
    <property type="project" value="UniProtKB-SubCell"/>
</dbReference>
<dbReference type="GO" id="GO:0004019">
    <property type="term" value="F:adenylosuccinate synthase activity"/>
    <property type="evidence" value="ECO:0007669"/>
    <property type="project" value="UniProtKB-UniRule"/>
</dbReference>
<dbReference type="GO" id="GO:0005525">
    <property type="term" value="F:GTP binding"/>
    <property type="evidence" value="ECO:0007669"/>
    <property type="project" value="UniProtKB-UniRule"/>
</dbReference>
<dbReference type="GO" id="GO:0000287">
    <property type="term" value="F:magnesium ion binding"/>
    <property type="evidence" value="ECO:0007669"/>
    <property type="project" value="UniProtKB-UniRule"/>
</dbReference>
<dbReference type="GO" id="GO:0044208">
    <property type="term" value="P:'de novo' AMP biosynthetic process"/>
    <property type="evidence" value="ECO:0007669"/>
    <property type="project" value="UniProtKB-UniRule"/>
</dbReference>
<dbReference type="GO" id="GO:0046040">
    <property type="term" value="P:IMP metabolic process"/>
    <property type="evidence" value="ECO:0007669"/>
    <property type="project" value="TreeGrafter"/>
</dbReference>
<dbReference type="CDD" id="cd03108">
    <property type="entry name" value="AdSS"/>
    <property type="match status" value="1"/>
</dbReference>
<dbReference type="FunFam" id="1.10.300.10:FF:000001">
    <property type="entry name" value="Adenylosuccinate synthetase"/>
    <property type="match status" value="1"/>
</dbReference>
<dbReference type="FunFam" id="3.90.170.10:FF:000001">
    <property type="entry name" value="Adenylosuccinate synthetase"/>
    <property type="match status" value="1"/>
</dbReference>
<dbReference type="Gene3D" id="3.40.440.10">
    <property type="entry name" value="Adenylosuccinate Synthetase, subunit A, domain 1"/>
    <property type="match status" value="1"/>
</dbReference>
<dbReference type="Gene3D" id="1.10.300.10">
    <property type="entry name" value="Adenylosuccinate Synthetase, subunit A, domain 2"/>
    <property type="match status" value="1"/>
</dbReference>
<dbReference type="Gene3D" id="3.90.170.10">
    <property type="entry name" value="Adenylosuccinate Synthetase, subunit A, domain 3"/>
    <property type="match status" value="1"/>
</dbReference>
<dbReference type="HAMAP" id="MF_00011">
    <property type="entry name" value="Adenylosucc_synth"/>
    <property type="match status" value="1"/>
</dbReference>
<dbReference type="InterPro" id="IPR018220">
    <property type="entry name" value="Adenylosuccin_syn_GTP-bd"/>
</dbReference>
<dbReference type="InterPro" id="IPR033128">
    <property type="entry name" value="Adenylosuccin_syn_Lys_AS"/>
</dbReference>
<dbReference type="InterPro" id="IPR042109">
    <property type="entry name" value="Adenylosuccinate_synth_dom1"/>
</dbReference>
<dbReference type="InterPro" id="IPR042110">
    <property type="entry name" value="Adenylosuccinate_synth_dom2"/>
</dbReference>
<dbReference type="InterPro" id="IPR042111">
    <property type="entry name" value="Adenylosuccinate_synth_dom3"/>
</dbReference>
<dbReference type="InterPro" id="IPR001114">
    <property type="entry name" value="Adenylosuccinate_synthetase"/>
</dbReference>
<dbReference type="InterPro" id="IPR027417">
    <property type="entry name" value="P-loop_NTPase"/>
</dbReference>
<dbReference type="NCBIfam" id="NF002223">
    <property type="entry name" value="PRK01117.1"/>
    <property type="match status" value="1"/>
</dbReference>
<dbReference type="NCBIfam" id="TIGR00184">
    <property type="entry name" value="purA"/>
    <property type="match status" value="1"/>
</dbReference>
<dbReference type="PANTHER" id="PTHR11846">
    <property type="entry name" value="ADENYLOSUCCINATE SYNTHETASE"/>
    <property type="match status" value="1"/>
</dbReference>
<dbReference type="PANTHER" id="PTHR11846:SF0">
    <property type="entry name" value="ADENYLOSUCCINATE SYNTHETASE"/>
    <property type="match status" value="1"/>
</dbReference>
<dbReference type="Pfam" id="PF00709">
    <property type="entry name" value="Adenylsucc_synt"/>
    <property type="match status" value="1"/>
</dbReference>
<dbReference type="SMART" id="SM00788">
    <property type="entry name" value="Adenylsucc_synt"/>
    <property type="match status" value="1"/>
</dbReference>
<dbReference type="SUPFAM" id="SSF52540">
    <property type="entry name" value="P-loop containing nucleoside triphosphate hydrolases"/>
    <property type="match status" value="1"/>
</dbReference>
<dbReference type="PROSITE" id="PS01266">
    <property type="entry name" value="ADENYLOSUCCIN_SYN_1"/>
    <property type="match status" value="1"/>
</dbReference>
<dbReference type="PROSITE" id="PS00513">
    <property type="entry name" value="ADENYLOSUCCIN_SYN_2"/>
    <property type="match status" value="1"/>
</dbReference>
<feature type="chain" id="PRO_1000057091" description="Adenylosuccinate synthetase">
    <location>
        <begin position="1"/>
        <end position="436"/>
    </location>
</feature>
<feature type="active site" description="Proton acceptor" evidence="1">
    <location>
        <position position="13"/>
    </location>
</feature>
<feature type="active site" description="Proton donor" evidence="1">
    <location>
        <position position="41"/>
    </location>
</feature>
<feature type="binding site" evidence="1">
    <location>
        <begin position="12"/>
        <end position="18"/>
    </location>
    <ligand>
        <name>GTP</name>
        <dbReference type="ChEBI" id="CHEBI:37565"/>
    </ligand>
</feature>
<feature type="binding site" description="in other chain" evidence="1">
    <location>
        <begin position="13"/>
        <end position="16"/>
    </location>
    <ligand>
        <name>IMP</name>
        <dbReference type="ChEBI" id="CHEBI:58053"/>
        <note>ligand shared between dimeric partners</note>
    </ligand>
</feature>
<feature type="binding site" evidence="1">
    <location>
        <position position="13"/>
    </location>
    <ligand>
        <name>Mg(2+)</name>
        <dbReference type="ChEBI" id="CHEBI:18420"/>
    </ligand>
</feature>
<feature type="binding site" description="in other chain" evidence="1">
    <location>
        <begin position="38"/>
        <end position="41"/>
    </location>
    <ligand>
        <name>IMP</name>
        <dbReference type="ChEBI" id="CHEBI:58053"/>
        <note>ligand shared between dimeric partners</note>
    </ligand>
</feature>
<feature type="binding site" evidence="1">
    <location>
        <begin position="40"/>
        <end position="42"/>
    </location>
    <ligand>
        <name>GTP</name>
        <dbReference type="ChEBI" id="CHEBI:37565"/>
    </ligand>
</feature>
<feature type="binding site" evidence="1">
    <location>
        <position position="40"/>
    </location>
    <ligand>
        <name>Mg(2+)</name>
        <dbReference type="ChEBI" id="CHEBI:18420"/>
    </ligand>
</feature>
<feature type="binding site" description="in other chain" evidence="1">
    <location>
        <position position="128"/>
    </location>
    <ligand>
        <name>IMP</name>
        <dbReference type="ChEBI" id="CHEBI:58053"/>
        <note>ligand shared between dimeric partners</note>
    </ligand>
</feature>
<feature type="binding site" evidence="1">
    <location>
        <position position="142"/>
    </location>
    <ligand>
        <name>IMP</name>
        <dbReference type="ChEBI" id="CHEBI:58053"/>
        <note>ligand shared between dimeric partners</note>
    </ligand>
</feature>
<feature type="binding site" description="in other chain" evidence="1">
    <location>
        <position position="223"/>
    </location>
    <ligand>
        <name>IMP</name>
        <dbReference type="ChEBI" id="CHEBI:58053"/>
        <note>ligand shared between dimeric partners</note>
    </ligand>
</feature>
<feature type="binding site" description="in other chain" evidence="1">
    <location>
        <position position="238"/>
    </location>
    <ligand>
        <name>IMP</name>
        <dbReference type="ChEBI" id="CHEBI:58053"/>
        <note>ligand shared between dimeric partners</note>
    </ligand>
</feature>
<feature type="binding site" evidence="1">
    <location>
        <begin position="298"/>
        <end position="304"/>
    </location>
    <ligand>
        <name>substrate</name>
    </ligand>
</feature>
<feature type="binding site" description="in other chain" evidence="1">
    <location>
        <position position="302"/>
    </location>
    <ligand>
        <name>IMP</name>
        <dbReference type="ChEBI" id="CHEBI:58053"/>
        <note>ligand shared between dimeric partners</note>
    </ligand>
</feature>
<feature type="binding site" evidence="1">
    <location>
        <position position="304"/>
    </location>
    <ligand>
        <name>GTP</name>
        <dbReference type="ChEBI" id="CHEBI:37565"/>
    </ligand>
</feature>
<feature type="binding site" evidence="1">
    <location>
        <begin position="330"/>
        <end position="332"/>
    </location>
    <ligand>
        <name>GTP</name>
        <dbReference type="ChEBI" id="CHEBI:37565"/>
    </ligand>
</feature>
<feature type="binding site" evidence="1">
    <location>
        <begin position="412"/>
        <end position="414"/>
    </location>
    <ligand>
        <name>GTP</name>
        <dbReference type="ChEBI" id="CHEBI:37565"/>
    </ligand>
</feature>
<name>PURA_PROM2</name>
<sequence length="436" mass="47752">MANVVVIGAQWGDEGKGKITDLLSRSADVVVRYQGGVNAGHTIVVDDKVLKLHLIPSGILYKNTSCLIGSGTVVDPKILLKEIDMLIDNGIDISGLKISSTSHVTMPYHRILDEAMEADRGSNKIGTTGRGIGPTYADKSQRNGIRIRDLLNNERLKDVIEIPLREKNGLLEKIYGIKPLKLEDILEEYLDYGERLSKHVVDCTRTIHAASKNKKNILFEGAQGTLLDLDHGTYPFVTSSNPISGGACIGAGVGPTLIDRVIGVAKAYTTRVGEGPFPTELQGSINDQLCDRGSEFGTTTGRRRRCGWFDGVIGKYAVSVNGLDCLAVTKLDVLDELDEIQVCIAYDLDGEEIDYFPTNSDDLKKCKPIFKKLKGWQCSTADCRKLSDLPQNAMNYLRFLAELMEVPIAIVSLGANRDQTIVIEDPIHGPKRALLR</sequence>
<accession>A8G3M2</accession>
<evidence type="ECO:0000255" key="1">
    <source>
        <dbReference type="HAMAP-Rule" id="MF_00011"/>
    </source>
</evidence>
<comment type="function">
    <text evidence="1">Plays an important role in the de novo pathway of purine nucleotide biosynthesis. Catalyzes the first committed step in the biosynthesis of AMP from IMP.</text>
</comment>
<comment type="catalytic activity">
    <reaction evidence="1">
        <text>IMP + L-aspartate + GTP = N(6)-(1,2-dicarboxyethyl)-AMP + GDP + phosphate + 2 H(+)</text>
        <dbReference type="Rhea" id="RHEA:15753"/>
        <dbReference type="ChEBI" id="CHEBI:15378"/>
        <dbReference type="ChEBI" id="CHEBI:29991"/>
        <dbReference type="ChEBI" id="CHEBI:37565"/>
        <dbReference type="ChEBI" id="CHEBI:43474"/>
        <dbReference type="ChEBI" id="CHEBI:57567"/>
        <dbReference type="ChEBI" id="CHEBI:58053"/>
        <dbReference type="ChEBI" id="CHEBI:58189"/>
        <dbReference type="EC" id="6.3.4.4"/>
    </reaction>
</comment>
<comment type="cofactor">
    <cofactor evidence="1">
        <name>Mg(2+)</name>
        <dbReference type="ChEBI" id="CHEBI:18420"/>
    </cofactor>
    <text evidence="1">Binds 1 Mg(2+) ion per subunit.</text>
</comment>
<comment type="pathway">
    <text evidence="1">Purine metabolism; AMP biosynthesis via de novo pathway; AMP from IMP: step 1/2.</text>
</comment>
<comment type="subunit">
    <text evidence="1">Homodimer.</text>
</comment>
<comment type="subcellular location">
    <subcellularLocation>
        <location evidence="1">Cytoplasm</location>
    </subcellularLocation>
</comment>
<comment type="similarity">
    <text evidence="1">Belongs to the adenylosuccinate synthetase family.</text>
</comment>
<organism>
    <name type="scientific">Prochlorococcus marinus (strain MIT 9215)</name>
    <dbReference type="NCBI Taxonomy" id="93060"/>
    <lineage>
        <taxon>Bacteria</taxon>
        <taxon>Bacillati</taxon>
        <taxon>Cyanobacteriota</taxon>
        <taxon>Cyanophyceae</taxon>
        <taxon>Synechococcales</taxon>
        <taxon>Prochlorococcaceae</taxon>
        <taxon>Prochlorococcus</taxon>
    </lineage>
</organism>
<keyword id="KW-0963">Cytoplasm</keyword>
<keyword id="KW-0342">GTP-binding</keyword>
<keyword id="KW-0436">Ligase</keyword>
<keyword id="KW-0460">Magnesium</keyword>
<keyword id="KW-0479">Metal-binding</keyword>
<keyword id="KW-0547">Nucleotide-binding</keyword>
<keyword id="KW-0658">Purine biosynthesis</keyword>
<proteinExistence type="inferred from homology"/>
<reference key="1">
    <citation type="journal article" date="2007" name="PLoS Genet.">
        <title>Patterns and implications of gene gain and loss in the evolution of Prochlorococcus.</title>
        <authorList>
            <person name="Kettler G.C."/>
            <person name="Martiny A.C."/>
            <person name="Huang K."/>
            <person name="Zucker J."/>
            <person name="Coleman M.L."/>
            <person name="Rodrigue S."/>
            <person name="Chen F."/>
            <person name="Lapidus A."/>
            <person name="Ferriera S."/>
            <person name="Johnson J."/>
            <person name="Steglich C."/>
            <person name="Church G.M."/>
            <person name="Richardson P."/>
            <person name="Chisholm S.W."/>
        </authorList>
    </citation>
    <scope>NUCLEOTIDE SEQUENCE [LARGE SCALE GENOMIC DNA]</scope>
    <source>
        <strain>MIT 9215</strain>
    </source>
</reference>
<protein>
    <recommendedName>
        <fullName evidence="1">Adenylosuccinate synthetase</fullName>
        <shortName evidence="1">AMPSase</shortName>
        <shortName evidence="1">AdSS</shortName>
        <ecNumber evidence="1">6.3.4.4</ecNumber>
    </recommendedName>
    <alternativeName>
        <fullName evidence="1">IMP--aspartate ligase</fullName>
    </alternativeName>
</protein>